<name>SOSSC_DROMO</name>
<feature type="chain" id="PRO_0000385323" description="SOSS complex subunit C homolog">
    <location>
        <begin position="1"/>
        <end position="115"/>
    </location>
</feature>
<reference key="1">
    <citation type="journal article" date="2007" name="Nature">
        <title>Evolution of genes and genomes on the Drosophila phylogeny.</title>
        <authorList>
            <consortium name="Drosophila 12 genomes consortium"/>
        </authorList>
    </citation>
    <scope>NUCLEOTIDE SEQUENCE [LARGE SCALE GENOMIC DNA]</scope>
    <source>
        <strain>Tucson 15081-1352.22</strain>
    </source>
</reference>
<organism>
    <name type="scientific">Drosophila mojavensis</name>
    <name type="common">Fruit fly</name>
    <dbReference type="NCBI Taxonomy" id="7230"/>
    <lineage>
        <taxon>Eukaryota</taxon>
        <taxon>Metazoa</taxon>
        <taxon>Ecdysozoa</taxon>
        <taxon>Arthropoda</taxon>
        <taxon>Hexapoda</taxon>
        <taxon>Insecta</taxon>
        <taxon>Pterygota</taxon>
        <taxon>Neoptera</taxon>
        <taxon>Endopterygota</taxon>
        <taxon>Diptera</taxon>
        <taxon>Brachycera</taxon>
        <taxon>Muscomorpha</taxon>
        <taxon>Ephydroidea</taxon>
        <taxon>Drosophilidae</taxon>
        <taxon>Drosophila</taxon>
    </lineage>
</organism>
<proteinExistence type="inferred from homology"/>
<evidence type="ECO:0000305" key="1"/>
<gene>
    <name type="ORF">GI11782</name>
</gene>
<dbReference type="EMBL" id="CH933809">
    <property type="protein sequence ID" value="EDW18992.1"/>
    <property type="molecule type" value="Genomic_DNA"/>
</dbReference>
<dbReference type="FunCoup" id="B4KZN6">
    <property type="interactions" value="412"/>
</dbReference>
<dbReference type="EnsemblMetazoa" id="FBtr0162507">
    <property type="protein sequence ID" value="FBpp0160999"/>
    <property type="gene ID" value="FBgn0134541"/>
</dbReference>
<dbReference type="EnsemblMetazoa" id="XM_002008480.3">
    <property type="protein sequence ID" value="XP_002008516.1"/>
    <property type="gene ID" value="LOC6582826"/>
</dbReference>
<dbReference type="GeneID" id="6582826"/>
<dbReference type="KEGG" id="dmo:Dmoj_GI11782"/>
<dbReference type="eggNOG" id="KOG3420">
    <property type="taxonomic scope" value="Eukaryota"/>
</dbReference>
<dbReference type="HOGENOM" id="CLU_145773_0_0_1"/>
<dbReference type="InParanoid" id="B4KZN6"/>
<dbReference type="OMA" id="VMETQHM"/>
<dbReference type="OrthoDB" id="419617at2759"/>
<dbReference type="PhylomeDB" id="B4KZN6"/>
<dbReference type="Proteomes" id="UP000009192">
    <property type="component" value="Unassembled WGS sequence"/>
</dbReference>
<dbReference type="GO" id="GO:0005654">
    <property type="term" value="C:nucleoplasm"/>
    <property type="evidence" value="ECO:0007669"/>
    <property type="project" value="TreeGrafter"/>
</dbReference>
<dbReference type="GO" id="GO:0070876">
    <property type="term" value="C:SOSS complex"/>
    <property type="evidence" value="ECO:0007669"/>
    <property type="project" value="InterPro"/>
</dbReference>
<dbReference type="GO" id="GO:0006281">
    <property type="term" value="P:DNA repair"/>
    <property type="evidence" value="ECO:0007669"/>
    <property type="project" value="InterPro"/>
</dbReference>
<dbReference type="InterPro" id="IPR031821">
    <property type="entry name" value="SOSSC"/>
</dbReference>
<dbReference type="PANTHER" id="PTHR31526">
    <property type="entry name" value="SOSS COMPLEX SUBUNIT C"/>
    <property type="match status" value="1"/>
</dbReference>
<dbReference type="PANTHER" id="PTHR31526:SF2">
    <property type="entry name" value="SOSS COMPLEX SUBUNIT C"/>
    <property type="match status" value="1"/>
</dbReference>
<dbReference type="Pfam" id="PF15925">
    <property type="entry name" value="SOSSC"/>
    <property type="match status" value="1"/>
</dbReference>
<protein>
    <recommendedName>
        <fullName>SOSS complex subunit C homolog</fullName>
    </recommendedName>
</protein>
<keyword id="KW-1185">Reference proteome</keyword>
<accession>B4KZN6</accession>
<comment type="similarity">
    <text evidence="1">Belongs to the SOSS-C family.</text>
</comment>
<sequence length="115" mass="12124">MAFPTSSAQQAETNRKILEEIQTKKQLLIGLGSTANQMPAPQLLGQPTVTAEFVQNVSATPNAAGGIAAPRSAFNPTSSTTLGFFIPQDSYFGNSFIPVLPRLEPVPTPPAPNSK</sequence>